<name>TPIS_DROSI</name>
<feature type="chain" id="PRO_0000090131" description="Triosephosphate isomerase">
    <location>
        <begin position="1"/>
        <end position="247"/>
    </location>
</feature>
<feature type="active site" description="Electrophile" evidence="1">
    <location>
        <position position="94"/>
    </location>
</feature>
<feature type="active site" description="Proton acceptor" evidence="1">
    <location>
        <position position="164"/>
    </location>
</feature>
<feature type="binding site" evidence="1">
    <location>
        <position position="10"/>
    </location>
    <ligand>
        <name>substrate</name>
    </ligand>
</feature>
<feature type="binding site" evidence="1">
    <location>
        <position position="12"/>
    </location>
    <ligand>
        <name>substrate</name>
    </ligand>
</feature>
<feature type="sequence variant" description="In strain: Ds-NA.">
    <original>V</original>
    <variation>M</variation>
    <location>
        <position position="142"/>
    </location>
</feature>
<comment type="catalytic activity">
    <reaction>
        <text>D-glyceraldehyde 3-phosphate = dihydroxyacetone phosphate</text>
        <dbReference type="Rhea" id="RHEA:18585"/>
        <dbReference type="ChEBI" id="CHEBI:57642"/>
        <dbReference type="ChEBI" id="CHEBI:59776"/>
        <dbReference type="EC" id="5.3.1.1"/>
    </reaction>
</comment>
<comment type="pathway">
    <text>Carbohydrate biosynthesis; gluconeogenesis.</text>
</comment>
<comment type="pathway">
    <text>Carbohydrate degradation; glycolysis; D-glyceraldehyde 3-phosphate from glycerone phosphate: step 1/1.</text>
</comment>
<comment type="subunit">
    <text>Homodimer.</text>
</comment>
<comment type="similarity">
    <text evidence="2">Belongs to the triosephosphate isomerase family.</text>
</comment>
<reference key="1">
    <citation type="journal article" date="1998" name="Mol. Biol. Evol.">
        <title>Nucleotide variation in the triosephosphate isomerase (Tpi) locus of Drosophila melanogaster and D. simulans.</title>
        <authorList>
            <person name="Hasson E."/>
            <person name="Wang I.-N."/>
            <person name="Zeng L.-W."/>
            <person name="Kreitman M."/>
            <person name="Eanes W.F."/>
        </authorList>
    </citation>
    <scope>NUCLEOTIDE SEQUENCE [GENOMIC DNA]</scope>
    <source>
        <strain>Ds-Ma</strain>
        <strain>Ds-Oa</strain>
        <strain>Ds-Ot</strain>
        <strain>Ds-Ra</strain>
        <strain>Ds-RB</strain>
        <strain>Ds-Te</strain>
        <strain>Ds-Wa</strain>
        <strain>DsDPF</strain>
    </source>
</reference>
<proteinExistence type="inferred from homology"/>
<accession>Q7JNS1</accession>
<accession>O76996</accession>
<evidence type="ECO:0000250" key="1"/>
<evidence type="ECO:0000305" key="2"/>
<keyword id="KW-0312">Gluconeogenesis</keyword>
<keyword id="KW-0324">Glycolysis</keyword>
<keyword id="KW-0413">Isomerase</keyword>
<dbReference type="EC" id="5.3.1.1"/>
<dbReference type="EMBL" id="U60861">
    <property type="protein sequence ID" value="AAC39066.1"/>
    <property type="molecule type" value="Genomic_DNA"/>
</dbReference>
<dbReference type="EMBL" id="U60862">
    <property type="protein sequence ID" value="AAC39067.1"/>
    <property type="molecule type" value="Genomic_DNA"/>
</dbReference>
<dbReference type="EMBL" id="U60863">
    <property type="protein sequence ID" value="AAC39068.1"/>
    <property type="molecule type" value="Genomic_DNA"/>
</dbReference>
<dbReference type="EMBL" id="U60864">
    <property type="protein sequence ID" value="AAC39069.1"/>
    <property type="molecule type" value="Genomic_DNA"/>
</dbReference>
<dbReference type="EMBL" id="U60865">
    <property type="protein sequence ID" value="AAC39070.1"/>
    <property type="molecule type" value="Genomic_DNA"/>
</dbReference>
<dbReference type="EMBL" id="U60866">
    <property type="protein sequence ID" value="AAC39071.1"/>
    <property type="molecule type" value="Genomic_DNA"/>
</dbReference>
<dbReference type="EMBL" id="U60867">
    <property type="protein sequence ID" value="AAC39072.1"/>
    <property type="molecule type" value="Genomic_DNA"/>
</dbReference>
<dbReference type="EMBL" id="U60868">
    <property type="protein sequence ID" value="AAC39073.1"/>
    <property type="molecule type" value="Genomic_DNA"/>
</dbReference>
<dbReference type="EMBL" id="U60869">
    <property type="protein sequence ID" value="AAC39074.1"/>
    <property type="molecule type" value="Genomic_DNA"/>
</dbReference>
<dbReference type="SMR" id="Q7JNS1"/>
<dbReference type="EnsemblMetazoa" id="FBtr0352644">
    <property type="protein sequence ID" value="FBpp0317196"/>
    <property type="gene ID" value="FBgn0025034"/>
</dbReference>
<dbReference type="EnsemblMetazoa" id="XM_016174069.3">
    <property type="protein sequence ID" value="XP_016036938.1"/>
    <property type="gene ID" value="LOC6730181"/>
</dbReference>
<dbReference type="GeneID" id="6730181"/>
<dbReference type="CTD" id="43582"/>
<dbReference type="OrthoDB" id="6715177at2759"/>
<dbReference type="UniPathway" id="UPA00109">
    <property type="reaction ID" value="UER00189"/>
</dbReference>
<dbReference type="UniPathway" id="UPA00138"/>
<dbReference type="Bgee" id="FBgn0025034">
    <property type="expression patterns" value="Expressed in adult organism and 3 other cell types or tissues"/>
</dbReference>
<dbReference type="GO" id="GO:0005829">
    <property type="term" value="C:cytosol"/>
    <property type="evidence" value="ECO:0007669"/>
    <property type="project" value="TreeGrafter"/>
</dbReference>
<dbReference type="GO" id="GO:0004807">
    <property type="term" value="F:triose-phosphate isomerase activity"/>
    <property type="evidence" value="ECO:0000250"/>
    <property type="project" value="UniProtKB"/>
</dbReference>
<dbReference type="GO" id="GO:0006094">
    <property type="term" value="P:gluconeogenesis"/>
    <property type="evidence" value="ECO:0007669"/>
    <property type="project" value="UniProtKB-UniPathway"/>
</dbReference>
<dbReference type="GO" id="GO:0046166">
    <property type="term" value="P:glyceraldehyde-3-phosphate biosynthetic process"/>
    <property type="evidence" value="ECO:0007669"/>
    <property type="project" value="TreeGrafter"/>
</dbReference>
<dbReference type="GO" id="GO:0019682">
    <property type="term" value="P:glyceraldehyde-3-phosphate metabolic process"/>
    <property type="evidence" value="ECO:0000250"/>
    <property type="project" value="UniProtKB"/>
</dbReference>
<dbReference type="GO" id="GO:0019563">
    <property type="term" value="P:glycerol catabolic process"/>
    <property type="evidence" value="ECO:0007669"/>
    <property type="project" value="TreeGrafter"/>
</dbReference>
<dbReference type="GO" id="GO:0006096">
    <property type="term" value="P:glycolytic process"/>
    <property type="evidence" value="ECO:0007669"/>
    <property type="project" value="UniProtKB-UniPathway"/>
</dbReference>
<dbReference type="CDD" id="cd00311">
    <property type="entry name" value="TIM"/>
    <property type="match status" value="1"/>
</dbReference>
<dbReference type="FunFam" id="3.20.20.70:FF:000025">
    <property type="entry name" value="Triosephosphate isomerase"/>
    <property type="match status" value="1"/>
</dbReference>
<dbReference type="Gene3D" id="3.20.20.70">
    <property type="entry name" value="Aldolase class I"/>
    <property type="match status" value="1"/>
</dbReference>
<dbReference type="HAMAP" id="MF_00147_B">
    <property type="entry name" value="TIM_B"/>
    <property type="match status" value="1"/>
</dbReference>
<dbReference type="InterPro" id="IPR013785">
    <property type="entry name" value="Aldolase_TIM"/>
</dbReference>
<dbReference type="InterPro" id="IPR035990">
    <property type="entry name" value="TIM_sf"/>
</dbReference>
<dbReference type="InterPro" id="IPR022896">
    <property type="entry name" value="TrioseP_Isoase_bac/euk"/>
</dbReference>
<dbReference type="InterPro" id="IPR000652">
    <property type="entry name" value="Triosephosphate_isomerase"/>
</dbReference>
<dbReference type="InterPro" id="IPR020861">
    <property type="entry name" value="Triosephosphate_isomerase_AS"/>
</dbReference>
<dbReference type="NCBIfam" id="TIGR00419">
    <property type="entry name" value="tim"/>
    <property type="match status" value="1"/>
</dbReference>
<dbReference type="PANTHER" id="PTHR21139">
    <property type="entry name" value="TRIOSEPHOSPHATE ISOMERASE"/>
    <property type="match status" value="1"/>
</dbReference>
<dbReference type="PANTHER" id="PTHR21139:SF2">
    <property type="entry name" value="TRIOSEPHOSPHATE ISOMERASE"/>
    <property type="match status" value="1"/>
</dbReference>
<dbReference type="Pfam" id="PF00121">
    <property type="entry name" value="TIM"/>
    <property type="match status" value="1"/>
</dbReference>
<dbReference type="SUPFAM" id="SSF51351">
    <property type="entry name" value="Triosephosphate isomerase (TIM)"/>
    <property type="match status" value="1"/>
</dbReference>
<dbReference type="PROSITE" id="PS00171">
    <property type="entry name" value="TIM_1"/>
    <property type="match status" value="1"/>
</dbReference>
<dbReference type="PROSITE" id="PS51440">
    <property type="entry name" value="TIM_2"/>
    <property type="match status" value="1"/>
</dbReference>
<gene>
    <name type="primary">Tpi</name>
</gene>
<organism>
    <name type="scientific">Drosophila simulans</name>
    <name type="common">Fruit fly</name>
    <dbReference type="NCBI Taxonomy" id="7240"/>
    <lineage>
        <taxon>Eukaryota</taxon>
        <taxon>Metazoa</taxon>
        <taxon>Ecdysozoa</taxon>
        <taxon>Arthropoda</taxon>
        <taxon>Hexapoda</taxon>
        <taxon>Insecta</taxon>
        <taxon>Pterygota</taxon>
        <taxon>Neoptera</taxon>
        <taxon>Endopterygota</taxon>
        <taxon>Diptera</taxon>
        <taxon>Brachycera</taxon>
        <taxon>Muscomorpha</taxon>
        <taxon>Ephydroidea</taxon>
        <taxon>Drosophilidae</taxon>
        <taxon>Drosophila</taxon>
        <taxon>Sophophora</taxon>
    </lineage>
</organism>
<sequence>MSRKFCVGGNWKMNGDQKSIAEIAKTLSSAALDPNTEVVIGCPAIYLMYARNLLPCELGLAGQNAYKVAKGAFTGEISPAMLKDIGADWVILGHSERRAIFGESDALIAEKAEHALAEGLKVIACIGETLEEREAGKTNEVVARQMCAYAQKIKDWKNVVVAYEPVWAIGTGKTATPDQAQEVHAFLRQWLSDNISKEVSASLRIQYGGSVTAANAKELAKKPDIDGFLVGGASLKPEFVDIINARQ</sequence>
<protein>
    <recommendedName>
        <fullName>Triosephosphate isomerase</fullName>
        <shortName>TIM</shortName>
        <ecNumber>5.3.1.1</ecNumber>
    </recommendedName>
    <alternativeName>
        <fullName>Triose-phosphate isomerase</fullName>
    </alternativeName>
</protein>